<reference key="1">
    <citation type="submission" date="2006-08" db="EMBL/GenBank/DDBJ databases">
        <title>Complete sequence of Maricaulis maris MCS10.</title>
        <authorList>
            <consortium name="US DOE Joint Genome Institute"/>
            <person name="Copeland A."/>
            <person name="Lucas S."/>
            <person name="Lapidus A."/>
            <person name="Barry K."/>
            <person name="Detter J.C."/>
            <person name="Glavina del Rio T."/>
            <person name="Hammon N."/>
            <person name="Israni S."/>
            <person name="Dalin E."/>
            <person name="Tice H."/>
            <person name="Pitluck S."/>
            <person name="Saunders E."/>
            <person name="Brettin T."/>
            <person name="Bruce D."/>
            <person name="Han C."/>
            <person name="Tapia R."/>
            <person name="Gilna P."/>
            <person name="Schmutz J."/>
            <person name="Larimer F."/>
            <person name="Land M."/>
            <person name="Hauser L."/>
            <person name="Kyrpides N."/>
            <person name="Mikhailova N."/>
            <person name="Viollier P."/>
            <person name="Stephens C."/>
            <person name="Richardson P."/>
        </authorList>
    </citation>
    <scope>NUCLEOTIDE SEQUENCE [LARGE SCALE GENOMIC DNA]</scope>
    <source>
        <strain>MCS10</strain>
    </source>
</reference>
<name>RSMH_MARMM</name>
<keyword id="KW-0963">Cytoplasm</keyword>
<keyword id="KW-0489">Methyltransferase</keyword>
<keyword id="KW-1185">Reference proteome</keyword>
<keyword id="KW-0698">rRNA processing</keyword>
<keyword id="KW-0949">S-adenosyl-L-methionine</keyword>
<keyword id="KW-0808">Transferase</keyword>
<dbReference type="EC" id="2.1.1.199" evidence="1"/>
<dbReference type="EMBL" id="CP000449">
    <property type="protein sequence ID" value="ABI66378.1"/>
    <property type="molecule type" value="Genomic_DNA"/>
</dbReference>
<dbReference type="RefSeq" id="WP_011644023.1">
    <property type="nucleotide sequence ID" value="NC_008347.1"/>
</dbReference>
<dbReference type="SMR" id="Q0AMV9"/>
<dbReference type="STRING" id="394221.Mmar10_2086"/>
<dbReference type="KEGG" id="mmr:Mmar10_2086"/>
<dbReference type="eggNOG" id="COG0275">
    <property type="taxonomic scope" value="Bacteria"/>
</dbReference>
<dbReference type="HOGENOM" id="CLU_038422_1_1_5"/>
<dbReference type="OrthoDB" id="9806637at2"/>
<dbReference type="Proteomes" id="UP000001964">
    <property type="component" value="Chromosome"/>
</dbReference>
<dbReference type="GO" id="GO:0005737">
    <property type="term" value="C:cytoplasm"/>
    <property type="evidence" value="ECO:0007669"/>
    <property type="project" value="UniProtKB-SubCell"/>
</dbReference>
<dbReference type="GO" id="GO:0071424">
    <property type="term" value="F:rRNA (cytosine-N4-)-methyltransferase activity"/>
    <property type="evidence" value="ECO:0007669"/>
    <property type="project" value="UniProtKB-UniRule"/>
</dbReference>
<dbReference type="GO" id="GO:0070475">
    <property type="term" value="P:rRNA base methylation"/>
    <property type="evidence" value="ECO:0007669"/>
    <property type="project" value="UniProtKB-UniRule"/>
</dbReference>
<dbReference type="FunFam" id="1.10.150.170:FF:000003">
    <property type="entry name" value="Ribosomal RNA small subunit methyltransferase H"/>
    <property type="match status" value="1"/>
</dbReference>
<dbReference type="Gene3D" id="1.10.150.170">
    <property type="entry name" value="Putative methyltransferase TM0872, insert domain"/>
    <property type="match status" value="1"/>
</dbReference>
<dbReference type="Gene3D" id="3.40.50.150">
    <property type="entry name" value="Vaccinia Virus protein VP39"/>
    <property type="match status" value="1"/>
</dbReference>
<dbReference type="HAMAP" id="MF_01007">
    <property type="entry name" value="16SrRNA_methyltr_H"/>
    <property type="match status" value="1"/>
</dbReference>
<dbReference type="InterPro" id="IPR002903">
    <property type="entry name" value="RsmH"/>
</dbReference>
<dbReference type="InterPro" id="IPR023397">
    <property type="entry name" value="SAM-dep_MeTrfase_MraW_recog"/>
</dbReference>
<dbReference type="InterPro" id="IPR029063">
    <property type="entry name" value="SAM-dependent_MTases_sf"/>
</dbReference>
<dbReference type="NCBIfam" id="TIGR00006">
    <property type="entry name" value="16S rRNA (cytosine(1402)-N(4))-methyltransferase RsmH"/>
    <property type="match status" value="1"/>
</dbReference>
<dbReference type="PANTHER" id="PTHR11265:SF0">
    <property type="entry name" value="12S RRNA N4-METHYLCYTIDINE METHYLTRANSFERASE"/>
    <property type="match status" value="1"/>
</dbReference>
<dbReference type="PANTHER" id="PTHR11265">
    <property type="entry name" value="S-ADENOSYL-METHYLTRANSFERASE MRAW"/>
    <property type="match status" value="1"/>
</dbReference>
<dbReference type="Pfam" id="PF01795">
    <property type="entry name" value="Methyltransf_5"/>
    <property type="match status" value="1"/>
</dbReference>
<dbReference type="PIRSF" id="PIRSF004486">
    <property type="entry name" value="MraW"/>
    <property type="match status" value="1"/>
</dbReference>
<dbReference type="SUPFAM" id="SSF81799">
    <property type="entry name" value="Putative methyltransferase TM0872, insert domain"/>
    <property type="match status" value="1"/>
</dbReference>
<dbReference type="SUPFAM" id="SSF53335">
    <property type="entry name" value="S-adenosyl-L-methionine-dependent methyltransferases"/>
    <property type="match status" value="1"/>
</dbReference>
<feature type="chain" id="PRO_0000386968" description="Ribosomal RNA small subunit methyltransferase H">
    <location>
        <begin position="1"/>
        <end position="334"/>
    </location>
</feature>
<feature type="binding site" evidence="1">
    <location>
        <begin position="34"/>
        <end position="36"/>
    </location>
    <ligand>
        <name>S-adenosyl-L-methionine</name>
        <dbReference type="ChEBI" id="CHEBI:59789"/>
    </ligand>
</feature>
<feature type="binding site" evidence="1">
    <location>
        <position position="52"/>
    </location>
    <ligand>
        <name>S-adenosyl-L-methionine</name>
        <dbReference type="ChEBI" id="CHEBI:59789"/>
    </ligand>
</feature>
<feature type="binding site" evidence="1">
    <location>
        <position position="87"/>
    </location>
    <ligand>
        <name>S-adenosyl-L-methionine</name>
        <dbReference type="ChEBI" id="CHEBI:59789"/>
    </ligand>
</feature>
<feature type="binding site" evidence="1">
    <location>
        <position position="100"/>
    </location>
    <ligand>
        <name>S-adenosyl-L-methionine</name>
        <dbReference type="ChEBI" id="CHEBI:59789"/>
    </ligand>
</feature>
<feature type="binding site" evidence="1">
    <location>
        <position position="107"/>
    </location>
    <ligand>
        <name>S-adenosyl-L-methionine</name>
        <dbReference type="ChEBI" id="CHEBI:59789"/>
    </ligand>
</feature>
<gene>
    <name evidence="1" type="primary">rsmH</name>
    <name type="synonym">mraW</name>
    <name type="ordered locus">Mmar10_2086</name>
</gene>
<proteinExistence type="inferred from homology"/>
<organism>
    <name type="scientific">Maricaulis maris (strain MCS10)</name>
    <name type="common">Caulobacter maris</name>
    <dbReference type="NCBI Taxonomy" id="394221"/>
    <lineage>
        <taxon>Bacteria</taxon>
        <taxon>Pseudomonadati</taxon>
        <taxon>Pseudomonadota</taxon>
        <taxon>Alphaproteobacteria</taxon>
        <taxon>Maricaulales</taxon>
        <taxon>Maricaulaceae</taxon>
        <taxon>Maricaulis</taxon>
    </lineage>
</organism>
<evidence type="ECO:0000255" key="1">
    <source>
        <dbReference type="HAMAP-Rule" id="MF_01007"/>
    </source>
</evidence>
<comment type="function">
    <text evidence="1">Specifically methylates the N4 position of cytidine in position 1402 (C1402) of 16S rRNA.</text>
</comment>
<comment type="catalytic activity">
    <reaction evidence="1">
        <text>cytidine(1402) in 16S rRNA + S-adenosyl-L-methionine = N(4)-methylcytidine(1402) in 16S rRNA + S-adenosyl-L-homocysteine + H(+)</text>
        <dbReference type="Rhea" id="RHEA:42928"/>
        <dbReference type="Rhea" id="RHEA-COMP:10286"/>
        <dbReference type="Rhea" id="RHEA-COMP:10287"/>
        <dbReference type="ChEBI" id="CHEBI:15378"/>
        <dbReference type="ChEBI" id="CHEBI:57856"/>
        <dbReference type="ChEBI" id="CHEBI:59789"/>
        <dbReference type="ChEBI" id="CHEBI:74506"/>
        <dbReference type="ChEBI" id="CHEBI:82748"/>
        <dbReference type="EC" id="2.1.1.199"/>
    </reaction>
</comment>
<comment type="subcellular location">
    <subcellularLocation>
        <location evidence="1">Cytoplasm</location>
    </subcellularLocation>
</comment>
<comment type="similarity">
    <text evidence="1">Belongs to the methyltransferase superfamily. RsmH family.</text>
</comment>
<sequence length="334" mass="35728">MSVAPHIPVMMSEVLHALEPRSGALYIDGTFGAGGYSRGILSAADCKLIGIDRDPAVQPTATQLVQASGGRFAFAEAPFSAMGEVLASRGIDQVDGIVLDIGVSSMQIDQAERGFSFMRKGPLDMRMAASGPTAADAVNRLKEAELADIFYVYGEERRSRRIAKFICTARAEAKIETTDRLAEIVTRATGGKHSKIHPATKVFQALRIFVNDELGELARALEASERLLAPLGRLVVVTFHSLEDRMVKTFLRSRAGLAGGGGSRYEPAVEAGPAPSFSLLTRRAVSASDEEAAENPRARSAKLRAAIRNEAPAWSDSPSLHTSIVPLARLEAAL</sequence>
<protein>
    <recommendedName>
        <fullName evidence="1">Ribosomal RNA small subunit methyltransferase H</fullName>
        <ecNumber evidence="1">2.1.1.199</ecNumber>
    </recommendedName>
    <alternativeName>
        <fullName evidence="1">16S rRNA m(4)C1402 methyltransferase</fullName>
    </alternativeName>
    <alternativeName>
        <fullName evidence="1">rRNA (cytosine-N(4)-)-methyltransferase RsmH</fullName>
    </alternativeName>
</protein>
<accession>Q0AMV9</accession>